<gene>
    <name evidence="1" type="primary">pqqE</name>
    <name type="ordered locus">Mpop_1769</name>
</gene>
<accession>B1ZIB2</accession>
<sequence length="384" mass="41528">MNAPTPAPSPADVIPAPVGLLAELTHRCPLRCPYCSNPLELDRRSAELDTQAWLRVLTEAAGLGVLHVHLSGGEPTARPDIVEITAKCAELGLYSNLITSGVGGALAKLDALYDAGLDHVQLSVQGVDAANAEKIGGLKNAQPQKMQFAARVTELGLPLTLNSVIHRGNIHEVPGFIDLAVKLGAKRLEVAHTQYYGWAYVNRAALMPDKAQVDESIRIVEAARERLKGQLVIDLVVPDYYAKYPKACAGGWGRKLMNVTPQGKVLPCHAAETIPGLEFWYVTDHALGDIWTKSPAFAAYRGTGWMKEPCRSCDRREKDWGGCRCQALALTGDAANTDPACSLSPLHAKMRDLAKEEAAENPPDYIYRSIGTNVQNPLSEKAPL</sequence>
<keyword id="KW-0004">4Fe-4S</keyword>
<keyword id="KW-0408">Iron</keyword>
<keyword id="KW-0411">Iron-sulfur</keyword>
<keyword id="KW-0479">Metal-binding</keyword>
<keyword id="KW-0560">Oxidoreductase</keyword>
<keyword id="KW-0884">PQQ biosynthesis</keyword>
<keyword id="KW-0949">S-adenosyl-L-methionine</keyword>
<proteinExistence type="inferred from homology"/>
<name>PQQE_METPB</name>
<protein>
    <recommendedName>
        <fullName evidence="1">PqqA peptide cyclase</fullName>
        <ecNumber evidence="1">1.21.98.4</ecNumber>
    </recommendedName>
    <alternativeName>
        <fullName evidence="1">Coenzyme PQQ synthesis protein E</fullName>
    </alternativeName>
    <alternativeName>
        <fullName evidence="1">Pyrroloquinoline quinone biosynthesis protein E</fullName>
    </alternativeName>
</protein>
<evidence type="ECO:0000255" key="1">
    <source>
        <dbReference type="HAMAP-Rule" id="MF_00660"/>
    </source>
</evidence>
<evidence type="ECO:0000255" key="2">
    <source>
        <dbReference type="PROSITE-ProRule" id="PRU01266"/>
    </source>
</evidence>
<organism>
    <name type="scientific">Methylorubrum populi (strain ATCC BAA-705 / NCIMB 13946 / BJ001)</name>
    <name type="common">Methylobacterium populi</name>
    <dbReference type="NCBI Taxonomy" id="441620"/>
    <lineage>
        <taxon>Bacteria</taxon>
        <taxon>Pseudomonadati</taxon>
        <taxon>Pseudomonadota</taxon>
        <taxon>Alphaproteobacteria</taxon>
        <taxon>Hyphomicrobiales</taxon>
        <taxon>Methylobacteriaceae</taxon>
        <taxon>Methylorubrum</taxon>
    </lineage>
</organism>
<comment type="function">
    <text evidence="1">Catalyzes the cross-linking of a glutamate residue and a tyrosine residue in the PqqA protein as part of the biosynthesis of pyrroloquinoline quinone (PQQ).</text>
</comment>
<comment type="catalytic activity">
    <reaction evidence="1">
        <text>[PQQ precursor protein] + S-adenosyl-L-methionine = E-Y cross-linked-[PQQ precursor protein] + 5'-deoxyadenosine + L-methionine + H(+)</text>
        <dbReference type="Rhea" id="RHEA:56836"/>
        <dbReference type="Rhea" id="RHEA-COMP:14800"/>
        <dbReference type="Rhea" id="RHEA-COMP:14801"/>
        <dbReference type="ChEBI" id="CHEBI:15378"/>
        <dbReference type="ChEBI" id="CHEBI:17319"/>
        <dbReference type="ChEBI" id="CHEBI:57844"/>
        <dbReference type="ChEBI" id="CHEBI:59789"/>
        <dbReference type="ChEBI" id="CHEBI:141026"/>
        <dbReference type="ChEBI" id="CHEBI:141027"/>
        <dbReference type="EC" id="1.21.98.4"/>
    </reaction>
</comment>
<comment type="cofactor">
    <cofactor evidence="1">
        <name>[4Fe-4S] cluster</name>
        <dbReference type="ChEBI" id="CHEBI:49883"/>
    </cofactor>
    <text evidence="1">Binds 1 [4Fe-4S] cluster. The cluster is coordinated with 3 cysteines and an exchangeable S-adenosyl-L-methionine.</text>
</comment>
<comment type="pathway">
    <text evidence="1">Cofactor biosynthesis; pyrroloquinoline quinone biosynthesis.</text>
</comment>
<comment type="subunit">
    <text evidence="1">Interacts with PqqD. The interaction is necessary for activity of PqqE.</text>
</comment>
<comment type="similarity">
    <text evidence="1">Belongs to the radical SAM superfamily. PqqE family.</text>
</comment>
<dbReference type="EC" id="1.21.98.4" evidence="1"/>
<dbReference type="EMBL" id="CP001029">
    <property type="protein sequence ID" value="ACB79932.1"/>
    <property type="molecule type" value="Genomic_DNA"/>
</dbReference>
<dbReference type="RefSeq" id="WP_012453678.1">
    <property type="nucleotide sequence ID" value="NC_010725.1"/>
</dbReference>
<dbReference type="SMR" id="B1ZIB2"/>
<dbReference type="STRING" id="441620.Mpop_1769"/>
<dbReference type="KEGG" id="mpo:Mpop_1769"/>
<dbReference type="eggNOG" id="COG0535">
    <property type="taxonomic scope" value="Bacteria"/>
</dbReference>
<dbReference type="HOGENOM" id="CLU_009273_4_7_5"/>
<dbReference type="OrthoDB" id="9792276at2"/>
<dbReference type="UniPathway" id="UPA00539"/>
<dbReference type="Proteomes" id="UP000007136">
    <property type="component" value="Chromosome"/>
</dbReference>
<dbReference type="GO" id="GO:0051539">
    <property type="term" value="F:4 iron, 4 sulfur cluster binding"/>
    <property type="evidence" value="ECO:0007669"/>
    <property type="project" value="UniProtKB-KW"/>
</dbReference>
<dbReference type="GO" id="GO:0009975">
    <property type="term" value="F:cyclase activity"/>
    <property type="evidence" value="ECO:0007669"/>
    <property type="project" value="UniProtKB-UniRule"/>
</dbReference>
<dbReference type="GO" id="GO:0005506">
    <property type="term" value="F:iron ion binding"/>
    <property type="evidence" value="ECO:0007669"/>
    <property type="project" value="UniProtKB-UniRule"/>
</dbReference>
<dbReference type="GO" id="GO:0016491">
    <property type="term" value="F:oxidoreductase activity"/>
    <property type="evidence" value="ECO:0007669"/>
    <property type="project" value="UniProtKB-KW"/>
</dbReference>
<dbReference type="GO" id="GO:1904047">
    <property type="term" value="F:S-adenosyl-L-methionine binding"/>
    <property type="evidence" value="ECO:0007669"/>
    <property type="project" value="UniProtKB-UniRule"/>
</dbReference>
<dbReference type="GO" id="GO:0018189">
    <property type="term" value="P:pyrroloquinoline quinone biosynthetic process"/>
    <property type="evidence" value="ECO:0007669"/>
    <property type="project" value="UniProtKB-UniRule"/>
</dbReference>
<dbReference type="CDD" id="cd01335">
    <property type="entry name" value="Radical_SAM"/>
    <property type="match status" value="1"/>
</dbReference>
<dbReference type="CDD" id="cd21119">
    <property type="entry name" value="SPASM_PqqE"/>
    <property type="match status" value="1"/>
</dbReference>
<dbReference type="Gene3D" id="3.20.20.70">
    <property type="entry name" value="Aldolase class I"/>
    <property type="match status" value="1"/>
</dbReference>
<dbReference type="HAMAP" id="MF_00660">
    <property type="entry name" value="PqqE"/>
    <property type="match status" value="1"/>
</dbReference>
<dbReference type="InterPro" id="IPR023885">
    <property type="entry name" value="4Fe4S-binding_SPASM_dom"/>
</dbReference>
<dbReference type="InterPro" id="IPR013785">
    <property type="entry name" value="Aldolase_TIM"/>
</dbReference>
<dbReference type="InterPro" id="IPR000385">
    <property type="entry name" value="MoaA_NifB_PqqE_Fe-S-bd_CS"/>
</dbReference>
<dbReference type="InterPro" id="IPR011843">
    <property type="entry name" value="PQQ_synth_PqqE_bac"/>
</dbReference>
<dbReference type="InterPro" id="IPR017200">
    <property type="entry name" value="PqqE-like"/>
</dbReference>
<dbReference type="InterPro" id="IPR050377">
    <property type="entry name" value="Radical_SAM_PqqE_MftC-like"/>
</dbReference>
<dbReference type="InterPro" id="IPR007197">
    <property type="entry name" value="rSAM"/>
</dbReference>
<dbReference type="NCBIfam" id="TIGR02109">
    <property type="entry name" value="PQQ_syn_pqqE"/>
    <property type="match status" value="1"/>
</dbReference>
<dbReference type="NCBIfam" id="TIGR04085">
    <property type="entry name" value="rSAM_more_4Fe4S"/>
    <property type="match status" value="1"/>
</dbReference>
<dbReference type="PANTHER" id="PTHR11228:SF7">
    <property type="entry name" value="PQQA PEPTIDE CYCLASE"/>
    <property type="match status" value="1"/>
</dbReference>
<dbReference type="PANTHER" id="PTHR11228">
    <property type="entry name" value="RADICAL SAM DOMAIN PROTEIN"/>
    <property type="match status" value="1"/>
</dbReference>
<dbReference type="Pfam" id="PF04055">
    <property type="entry name" value="Radical_SAM"/>
    <property type="match status" value="1"/>
</dbReference>
<dbReference type="Pfam" id="PF13186">
    <property type="entry name" value="SPASM"/>
    <property type="match status" value="1"/>
</dbReference>
<dbReference type="PIRSF" id="PIRSF037420">
    <property type="entry name" value="PQQ_syn_pqqE"/>
    <property type="match status" value="1"/>
</dbReference>
<dbReference type="SFLD" id="SFLDF00280">
    <property type="entry name" value="coenzyme_PQQ_synthesis_protein"/>
    <property type="match status" value="1"/>
</dbReference>
<dbReference type="SFLD" id="SFLDS00029">
    <property type="entry name" value="Radical_SAM"/>
    <property type="match status" value="1"/>
</dbReference>
<dbReference type="SUPFAM" id="SSF102114">
    <property type="entry name" value="Radical SAM enzymes"/>
    <property type="match status" value="1"/>
</dbReference>
<dbReference type="PROSITE" id="PS01305">
    <property type="entry name" value="MOAA_NIFB_PQQE"/>
    <property type="match status" value="1"/>
</dbReference>
<dbReference type="PROSITE" id="PS51918">
    <property type="entry name" value="RADICAL_SAM"/>
    <property type="match status" value="1"/>
</dbReference>
<reference key="1">
    <citation type="submission" date="2008-04" db="EMBL/GenBank/DDBJ databases">
        <title>Complete sequence of chromosome of Methylobacterium populi BJ001.</title>
        <authorList>
            <consortium name="US DOE Joint Genome Institute"/>
            <person name="Copeland A."/>
            <person name="Lucas S."/>
            <person name="Lapidus A."/>
            <person name="Glavina del Rio T."/>
            <person name="Dalin E."/>
            <person name="Tice H."/>
            <person name="Bruce D."/>
            <person name="Goodwin L."/>
            <person name="Pitluck S."/>
            <person name="Chertkov O."/>
            <person name="Brettin T."/>
            <person name="Detter J.C."/>
            <person name="Han C."/>
            <person name="Kuske C.R."/>
            <person name="Schmutz J."/>
            <person name="Larimer F."/>
            <person name="Land M."/>
            <person name="Hauser L."/>
            <person name="Kyrpides N."/>
            <person name="Mikhailova N."/>
            <person name="Marx C."/>
            <person name="Richardson P."/>
        </authorList>
    </citation>
    <scope>NUCLEOTIDE SEQUENCE [LARGE SCALE GENOMIC DNA]</scope>
    <source>
        <strain>ATCC BAA-705 / NCIMB 13946 / BJ001</strain>
    </source>
</reference>
<feature type="chain" id="PRO_1000131278" description="PqqA peptide cyclase">
    <location>
        <begin position="1"/>
        <end position="384"/>
    </location>
</feature>
<feature type="domain" description="Radical SAM core" evidence="2">
    <location>
        <begin position="14"/>
        <end position="226"/>
    </location>
</feature>
<feature type="binding site" evidence="1">
    <location>
        <position position="28"/>
    </location>
    <ligand>
        <name>[4Fe-4S] cluster</name>
        <dbReference type="ChEBI" id="CHEBI:49883"/>
        <note>4Fe-4S-S-AdoMet</note>
    </ligand>
</feature>
<feature type="binding site" evidence="1">
    <location>
        <position position="32"/>
    </location>
    <ligand>
        <name>[4Fe-4S] cluster</name>
        <dbReference type="ChEBI" id="CHEBI:49883"/>
        <note>4Fe-4S-S-AdoMet</note>
    </ligand>
</feature>
<feature type="binding site" evidence="1">
    <location>
        <position position="35"/>
    </location>
    <ligand>
        <name>[4Fe-4S] cluster</name>
        <dbReference type="ChEBI" id="CHEBI:49883"/>
        <note>4Fe-4S-S-AdoMet</note>
    </ligand>
</feature>